<feature type="chain" id="PRO_1000184817" description="ATP synthase subunit delta">
    <location>
        <begin position="1"/>
        <end position="178"/>
    </location>
</feature>
<proteinExistence type="inferred from homology"/>
<sequence>MDKKTVKVIEKYSMPFVQLVLEKGEEDRIFSDLTQIKQVVEKTGLPSFLKQVAVDESDKEKTIAFFQDSVSPLLQNFIQVLAYNHRANLFYDVLVDCLNRLEKETNRFEVTITSAHPLTDEQKTRLLPLIEKKMSLKVRSVKEQIDESLIGGFVIFANHKTIDVSIKQQLKVVKENLK</sequence>
<comment type="function">
    <text evidence="1">F(1)F(0) ATP synthase produces ATP from ADP in the presence of a proton or sodium gradient. F-type ATPases consist of two structural domains, F(1) containing the extramembraneous catalytic core and F(0) containing the membrane proton channel, linked together by a central stalk and a peripheral stalk. During catalysis, ATP synthesis in the catalytic domain of F(1) is coupled via a rotary mechanism of the central stalk subunits to proton translocation.</text>
</comment>
<comment type="function">
    <text evidence="1">This protein is part of the stalk that links CF(0) to CF(1). It either transmits conformational changes from CF(0) to CF(1) or is implicated in proton conduction.</text>
</comment>
<comment type="subunit">
    <text evidence="1">F-type ATPases have 2 components, F(1) - the catalytic core - and F(0) - the membrane proton channel. F(1) has five subunits: alpha(3), beta(3), gamma(1), delta(1), epsilon(1). F(0) has three main subunits: a(1), b(2) and c(10-14). The alpha and beta chains form an alternating ring which encloses part of the gamma chain. F(1) is attached to F(0) by a central stalk formed by the gamma and epsilon chains, while a peripheral stalk is formed by the delta and b chains.</text>
</comment>
<comment type="subcellular location">
    <subcellularLocation>
        <location evidence="1">Cell membrane</location>
        <topology evidence="1">Peripheral membrane protein</topology>
    </subcellularLocation>
</comment>
<comment type="similarity">
    <text evidence="1">Belongs to the ATPase delta chain family.</text>
</comment>
<organism>
    <name type="scientific">Streptococcus pneumoniae (strain JJA)</name>
    <dbReference type="NCBI Taxonomy" id="488222"/>
    <lineage>
        <taxon>Bacteria</taxon>
        <taxon>Bacillati</taxon>
        <taxon>Bacillota</taxon>
        <taxon>Bacilli</taxon>
        <taxon>Lactobacillales</taxon>
        <taxon>Streptococcaceae</taxon>
        <taxon>Streptococcus</taxon>
    </lineage>
</organism>
<dbReference type="EMBL" id="CP000919">
    <property type="protein sequence ID" value="ACO18826.1"/>
    <property type="molecule type" value="Genomic_DNA"/>
</dbReference>
<dbReference type="RefSeq" id="WP_000359036.1">
    <property type="nucleotide sequence ID" value="NC_012466.1"/>
</dbReference>
<dbReference type="SMR" id="C1CF96"/>
<dbReference type="KEGG" id="sjj:SPJ_1413"/>
<dbReference type="HOGENOM" id="CLU_085114_1_2_9"/>
<dbReference type="Proteomes" id="UP000002206">
    <property type="component" value="Chromosome"/>
</dbReference>
<dbReference type="GO" id="GO:0005886">
    <property type="term" value="C:plasma membrane"/>
    <property type="evidence" value="ECO:0007669"/>
    <property type="project" value="UniProtKB-SubCell"/>
</dbReference>
<dbReference type="GO" id="GO:0045259">
    <property type="term" value="C:proton-transporting ATP synthase complex"/>
    <property type="evidence" value="ECO:0007669"/>
    <property type="project" value="UniProtKB-KW"/>
</dbReference>
<dbReference type="GO" id="GO:0046933">
    <property type="term" value="F:proton-transporting ATP synthase activity, rotational mechanism"/>
    <property type="evidence" value="ECO:0007669"/>
    <property type="project" value="UniProtKB-UniRule"/>
</dbReference>
<dbReference type="Gene3D" id="1.10.520.20">
    <property type="entry name" value="N-terminal domain of the delta subunit of the F1F0-ATP synthase"/>
    <property type="match status" value="1"/>
</dbReference>
<dbReference type="HAMAP" id="MF_01416">
    <property type="entry name" value="ATP_synth_delta_bact"/>
    <property type="match status" value="1"/>
</dbReference>
<dbReference type="InterPro" id="IPR026015">
    <property type="entry name" value="ATP_synth_OSCP/delta_N_sf"/>
</dbReference>
<dbReference type="InterPro" id="IPR000711">
    <property type="entry name" value="ATPase_OSCP/dsu"/>
</dbReference>
<dbReference type="NCBIfam" id="TIGR01145">
    <property type="entry name" value="ATP_synt_delta"/>
    <property type="match status" value="1"/>
</dbReference>
<dbReference type="NCBIfam" id="NF004401">
    <property type="entry name" value="PRK05758.2-1"/>
    <property type="match status" value="1"/>
</dbReference>
<dbReference type="PANTHER" id="PTHR11910">
    <property type="entry name" value="ATP SYNTHASE DELTA CHAIN"/>
    <property type="match status" value="1"/>
</dbReference>
<dbReference type="Pfam" id="PF00213">
    <property type="entry name" value="OSCP"/>
    <property type="match status" value="1"/>
</dbReference>
<dbReference type="PRINTS" id="PR00125">
    <property type="entry name" value="ATPASEDELTA"/>
</dbReference>
<dbReference type="SUPFAM" id="SSF47928">
    <property type="entry name" value="N-terminal domain of the delta subunit of the F1F0-ATP synthase"/>
    <property type="match status" value="1"/>
</dbReference>
<evidence type="ECO:0000255" key="1">
    <source>
        <dbReference type="HAMAP-Rule" id="MF_01416"/>
    </source>
</evidence>
<protein>
    <recommendedName>
        <fullName evidence="1">ATP synthase subunit delta</fullName>
    </recommendedName>
    <alternativeName>
        <fullName evidence="1">ATP synthase F(1) sector subunit delta</fullName>
    </alternativeName>
    <alternativeName>
        <fullName evidence="1">F-type ATPase subunit delta</fullName>
        <shortName evidence="1">F-ATPase subunit delta</shortName>
    </alternativeName>
</protein>
<gene>
    <name evidence="1" type="primary">atpH</name>
    <name type="ordered locus">SPJ_1413</name>
</gene>
<name>ATPD_STRZJ</name>
<keyword id="KW-0066">ATP synthesis</keyword>
<keyword id="KW-1003">Cell membrane</keyword>
<keyword id="KW-0139">CF(1)</keyword>
<keyword id="KW-0375">Hydrogen ion transport</keyword>
<keyword id="KW-0406">Ion transport</keyword>
<keyword id="KW-0472">Membrane</keyword>
<keyword id="KW-0813">Transport</keyword>
<reference key="1">
    <citation type="journal article" date="2010" name="Genome Biol.">
        <title>Structure and dynamics of the pan-genome of Streptococcus pneumoniae and closely related species.</title>
        <authorList>
            <person name="Donati C."/>
            <person name="Hiller N.L."/>
            <person name="Tettelin H."/>
            <person name="Muzzi A."/>
            <person name="Croucher N.J."/>
            <person name="Angiuoli S.V."/>
            <person name="Oggioni M."/>
            <person name="Dunning Hotopp J.C."/>
            <person name="Hu F.Z."/>
            <person name="Riley D.R."/>
            <person name="Covacci A."/>
            <person name="Mitchell T.J."/>
            <person name="Bentley S.D."/>
            <person name="Kilian M."/>
            <person name="Ehrlich G.D."/>
            <person name="Rappuoli R."/>
            <person name="Moxon E.R."/>
            <person name="Masignani V."/>
        </authorList>
    </citation>
    <scope>NUCLEOTIDE SEQUENCE [LARGE SCALE GENOMIC DNA]</scope>
    <source>
        <strain>JJA</strain>
    </source>
</reference>
<accession>C1CF96</accession>